<organism>
    <name type="scientific">Streptococcus pyogenes serotype M3 (strain SSI-1)</name>
    <dbReference type="NCBI Taxonomy" id="193567"/>
    <lineage>
        <taxon>Bacteria</taxon>
        <taxon>Bacillati</taxon>
        <taxon>Bacillota</taxon>
        <taxon>Bacilli</taxon>
        <taxon>Lactobacillales</taxon>
        <taxon>Streptococcaceae</taxon>
        <taxon>Streptococcus</taxon>
    </lineage>
</organism>
<comment type="function">
    <text evidence="1">DNA-dependent RNA polymerase catalyzes the transcription of DNA into RNA using the four ribonucleoside triphosphates as substrates.</text>
</comment>
<comment type="catalytic activity">
    <reaction evidence="1">
        <text>RNA(n) + a ribonucleoside 5'-triphosphate = RNA(n+1) + diphosphate</text>
        <dbReference type="Rhea" id="RHEA:21248"/>
        <dbReference type="Rhea" id="RHEA-COMP:14527"/>
        <dbReference type="Rhea" id="RHEA-COMP:17342"/>
        <dbReference type="ChEBI" id="CHEBI:33019"/>
        <dbReference type="ChEBI" id="CHEBI:61557"/>
        <dbReference type="ChEBI" id="CHEBI:140395"/>
        <dbReference type="EC" id="2.7.7.6"/>
    </reaction>
</comment>
<comment type="subunit">
    <text evidence="1">Homodimer. The RNAP catalytic core consists of 2 alpha, 1 beta, 1 beta' and 1 omega subunit. When a sigma factor is associated with the core the holoenzyme is formed, which can initiate transcription.</text>
</comment>
<comment type="domain">
    <text evidence="1">The N-terminal domain is essential for RNAP assembly and basal transcription, whereas the C-terminal domain is involved in interaction with transcriptional regulators and with upstream promoter elements.</text>
</comment>
<comment type="similarity">
    <text evidence="1">Belongs to the RNA polymerase alpha chain family.</text>
</comment>
<name>RPOA_STRPQ</name>
<feature type="chain" id="PRO_0000411554" description="DNA-directed RNA polymerase subunit alpha">
    <location>
        <begin position="1"/>
        <end position="312"/>
    </location>
</feature>
<feature type="region of interest" description="Alpha N-terminal domain (alpha-NTD)" evidence="1">
    <location>
        <begin position="1"/>
        <end position="226"/>
    </location>
</feature>
<feature type="region of interest" description="Alpha C-terminal domain (alpha-CTD)" evidence="1">
    <location>
        <begin position="243"/>
        <end position="312"/>
    </location>
</feature>
<keyword id="KW-0240">DNA-directed RNA polymerase</keyword>
<keyword id="KW-0548">Nucleotidyltransferase</keyword>
<keyword id="KW-0804">Transcription</keyword>
<keyword id="KW-0808">Transferase</keyword>
<sequence>MIEFEKPIITKIDENKDYGRFVIEPLERGYGTTLGNSLRRVLLSSLPGAAVTSIKIDGVLHEFDTIPGVREDVMQIILNVKGLAVKSYVEDEKIIELEVEGPAEVTAGDILTDSDIELVNPDHYLFTIAEGHSLRATMTVAKKRGYVPAEGNKKDDAPVGTLAVDSIYTPVKKVNYQVEPARVGSNDGFDKLTIEIMTNGTIIPEDALGLSARVLIEHLNLFTDLTEVAKSTEVMKETEKVNDEKVLDRTIEELDLSVRSYNCLKRAGINTVFDLTEKSEPEMMKVRNLGRKSLEEVKVKLADLGLGLKNDK</sequence>
<protein>
    <recommendedName>
        <fullName evidence="1">DNA-directed RNA polymerase subunit alpha</fullName>
        <shortName evidence="1">RNAP subunit alpha</shortName>
        <ecNumber evidence="1">2.7.7.6</ecNumber>
    </recommendedName>
    <alternativeName>
        <fullName evidence="1">RNA polymerase subunit alpha</fullName>
    </alternativeName>
    <alternativeName>
        <fullName evidence="1">Transcriptase subunit alpha</fullName>
    </alternativeName>
</protein>
<gene>
    <name evidence="1" type="primary">rpoA</name>
    <name type="ordered locus">SPs0068</name>
</gene>
<accession>P0DF29</accession>
<accession>Q8K8W9</accession>
<dbReference type="EC" id="2.7.7.6" evidence="1"/>
<dbReference type="EMBL" id="BA000034">
    <property type="protein sequence ID" value="BAC63163.1"/>
    <property type="molecule type" value="Genomic_DNA"/>
</dbReference>
<dbReference type="RefSeq" id="WP_011054107.1">
    <property type="nucleotide sequence ID" value="NC_004606.1"/>
</dbReference>
<dbReference type="SMR" id="P0DF29"/>
<dbReference type="KEGG" id="sps:SPs0068"/>
<dbReference type="HOGENOM" id="CLU_053084_0_1_9"/>
<dbReference type="GO" id="GO:0005737">
    <property type="term" value="C:cytoplasm"/>
    <property type="evidence" value="ECO:0007669"/>
    <property type="project" value="UniProtKB-ARBA"/>
</dbReference>
<dbReference type="GO" id="GO:0000428">
    <property type="term" value="C:DNA-directed RNA polymerase complex"/>
    <property type="evidence" value="ECO:0007669"/>
    <property type="project" value="UniProtKB-KW"/>
</dbReference>
<dbReference type="GO" id="GO:0003677">
    <property type="term" value="F:DNA binding"/>
    <property type="evidence" value="ECO:0007669"/>
    <property type="project" value="UniProtKB-UniRule"/>
</dbReference>
<dbReference type="GO" id="GO:0003899">
    <property type="term" value="F:DNA-directed RNA polymerase activity"/>
    <property type="evidence" value="ECO:0007669"/>
    <property type="project" value="UniProtKB-UniRule"/>
</dbReference>
<dbReference type="GO" id="GO:0046983">
    <property type="term" value="F:protein dimerization activity"/>
    <property type="evidence" value="ECO:0007669"/>
    <property type="project" value="InterPro"/>
</dbReference>
<dbReference type="GO" id="GO:0006351">
    <property type="term" value="P:DNA-templated transcription"/>
    <property type="evidence" value="ECO:0007669"/>
    <property type="project" value="UniProtKB-UniRule"/>
</dbReference>
<dbReference type="CDD" id="cd06928">
    <property type="entry name" value="RNAP_alpha_NTD"/>
    <property type="match status" value="1"/>
</dbReference>
<dbReference type="FunFam" id="1.10.150.20:FF:000001">
    <property type="entry name" value="DNA-directed RNA polymerase subunit alpha"/>
    <property type="match status" value="1"/>
</dbReference>
<dbReference type="FunFam" id="2.170.120.12:FF:000001">
    <property type="entry name" value="DNA-directed RNA polymerase subunit alpha"/>
    <property type="match status" value="1"/>
</dbReference>
<dbReference type="Gene3D" id="1.10.150.20">
    <property type="entry name" value="5' to 3' exonuclease, C-terminal subdomain"/>
    <property type="match status" value="1"/>
</dbReference>
<dbReference type="Gene3D" id="2.170.120.12">
    <property type="entry name" value="DNA-directed RNA polymerase, insert domain"/>
    <property type="match status" value="1"/>
</dbReference>
<dbReference type="Gene3D" id="3.30.1360.10">
    <property type="entry name" value="RNA polymerase, RBP11-like subunit"/>
    <property type="match status" value="1"/>
</dbReference>
<dbReference type="HAMAP" id="MF_00059">
    <property type="entry name" value="RNApol_bact_RpoA"/>
    <property type="match status" value="1"/>
</dbReference>
<dbReference type="InterPro" id="IPR011262">
    <property type="entry name" value="DNA-dir_RNA_pol_insert"/>
</dbReference>
<dbReference type="InterPro" id="IPR011263">
    <property type="entry name" value="DNA-dir_RNA_pol_RpoA/D/Rpb3"/>
</dbReference>
<dbReference type="InterPro" id="IPR011773">
    <property type="entry name" value="DNA-dir_RpoA"/>
</dbReference>
<dbReference type="InterPro" id="IPR036603">
    <property type="entry name" value="RBP11-like"/>
</dbReference>
<dbReference type="InterPro" id="IPR011260">
    <property type="entry name" value="RNAP_asu_C"/>
</dbReference>
<dbReference type="InterPro" id="IPR036643">
    <property type="entry name" value="RNApol_insert_sf"/>
</dbReference>
<dbReference type="NCBIfam" id="NF003513">
    <property type="entry name" value="PRK05182.1-2"/>
    <property type="match status" value="1"/>
</dbReference>
<dbReference type="NCBIfam" id="NF003515">
    <property type="entry name" value="PRK05182.2-1"/>
    <property type="match status" value="1"/>
</dbReference>
<dbReference type="NCBIfam" id="NF003518">
    <property type="entry name" value="PRK05182.2-4"/>
    <property type="match status" value="1"/>
</dbReference>
<dbReference type="NCBIfam" id="NF003519">
    <property type="entry name" value="PRK05182.2-5"/>
    <property type="match status" value="1"/>
</dbReference>
<dbReference type="NCBIfam" id="TIGR02027">
    <property type="entry name" value="rpoA"/>
    <property type="match status" value="1"/>
</dbReference>
<dbReference type="Pfam" id="PF01000">
    <property type="entry name" value="RNA_pol_A_bac"/>
    <property type="match status" value="1"/>
</dbReference>
<dbReference type="Pfam" id="PF03118">
    <property type="entry name" value="RNA_pol_A_CTD"/>
    <property type="match status" value="1"/>
</dbReference>
<dbReference type="Pfam" id="PF01193">
    <property type="entry name" value="RNA_pol_L"/>
    <property type="match status" value="1"/>
</dbReference>
<dbReference type="SMART" id="SM00662">
    <property type="entry name" value="RPOLD"/>
    <property type="match status" value="1"/>
</dbReference>
<dbReference type="SUPFAM" id="SSF47789">
    <property type="entry name" value="C-terminal domain of RNA polymerase alpha subunit"/>
    <property type="match status" value="1"/>
</dbReference>
<dbReference type="SUPFAM" id="SSF56553">
    <property type="entry name" value="Insert subdomain of RNA polymerase alpha subunit"/>
    <property type="match status" value="1"/>
</dbReference>
<dbReference type="SUPFAM" id="SSF55257">
    <property type="entry name" value="RBP11-like subunits of RNA polymerase"/>
    <property type="match status" value="1"/>
</dbReference>
<reference key="1">
    <citation type="journal article" date="2003" name="Genome Res.">
        <title>Genome sequence of an M3 strain of Streptococcus pyogenes reveals a large-scale genomic rearrangement in invasive strains and new insights into phage evolution.</title>
        <authorList>
            <person name="Nakagawa I."/>
            <person name="Kurokawa K."/>
            <person name="Yamashita A."/>
            <person name="Nakata M."/>
            <person name="Tomiyasu Y."/>
            <person name="Okahashi N."/>
            <person name="Kawabata S."/>
            <person name="Yamazaki K."/>
            <person name="Shiba T."/>
            <person name="Yasunaga T."/>
            <person name="Hayashi H."/>
            <person name="Hattori M."/>
            <person name="Hamada S."/>
        </authorList>
    </citation>
    <scope>NUCLEOTIDE SEQUENCE [LARGE SCALE GENOMIC DNA]</scope>
    <source>
        <strain>SSI-1</strain>
    </source>
</reference>
<proteinExistence type="inferred from homology"/>
<evidence type="ECO:0000255" key="1">
    <source>
        <dbReference type="HAMAP-Rule" id="MF_00059"/>
    </source>
</evidence>